<sequence>MSAGNGTPWGSAVGEEAWAGSGVAVEGSELPTFSTAAKVRVGVTIVLFVSSAGGNLAVLWSVTRPQPSQLRPSPVRTLFAHLAAADLLVTFVVMPLDATWNITVQWLAGDIACRTLMFLKLMAMYSAAFLPVVIGLDRQAAVLNPLGSRSGVRKLLGAAWGLSFLLALPQLFLFHTVHRAGPVPFTQCVTKGSFKARWQETTYNLFTFCCLFLLPLIAMAICYSRIVLSVSSPQTRKGSHAPAGEFALRRSFDNRPRVCLRALRLALLILLTFILCWTPYYLLGLWYWFSPTMLTEVPPSLSHILFLFGLLNAPLDPLLYGAFTFGCRRGHQELSIDSSKEGSGRMLQQEIHALRQQEVQKTVTSRSAGETKGISITSI</sequence>
<reference key="1">
    <citation type="journal article" date="2001" name="Biochem. Biophys. Res. Commun.">
        <title>A gonadotropin-releasing hormone (GnRH) receptor specific for GnRH II in primates.</title>
        <authorList>
            <person name="Neill J.D."/>
            <person name="Duck L.W."/>
            <person name="Sellers J.C."/>
            <person name="Musgrove L.C."/>
        </authorList>
    </citation>
    <scope>NUCLEOTIDE SEQUENCE [MRNA]</scope>
</reference>
<name>GNRR2_CHLAE</name>
<comment type="function">
    <text>Receptor for gonadotropin releasing hormone II (GnRH II). This receptor mediates its action by association with G proteins that activate a phosphatidylinositol-calcium second messenger system.</text>
</comment>
<comment type="subcellular location">
    <subcellularLocation>
        <location>Cell membrane</location>
        <topology>Multi-pass membrane protein</topology>
    </subcellularLocation>
</comment>
<comment type="PTM">
    <text evidence="3">Phosphorylated on the C-terminal cytoplasmic tail.</text>
</comment>
<comment type="similarity">
    <text evidence="2">Belongs to the G-protein coupled receptor 1 family.</text>
</comment>
<keyword id="KW-1003">Cell membrane</keyword>
<keyword id="KW-1015">Disulfide bond</keyword>
<keyword id="KW-0297">G-protein coupled receptor</keyword>
<keyword id="KW-0325">Glycoprotein</keyword>
<keyword id="KW-0472">Membrane</keyword>
<keyword id="KW-0597">Phosphoprotein</keyword>
<keyword id="KW-0675">Receptor</keyword>
<keyword id="KW-0807">Transducer</keyword>
<keyword id="KW-0812">Transmembrane</keyword>
<keyword id="KW-1133">Transmembrane helix</keyword>
<feature type="chain" id="PRO_0000069495" description="Gonadotropin-releasing hormone II receptor">
    <location>
        <begin position="1"/>
        <end position="379"/>
    </location>
</feature>
<feature type="topological domain" description="Extracellular" evidence="1">
    <location>
        <begin position="1"/>
        <end position="40"/>
    </location>
</feature>
<feature type="transmembrane region" description="Helical; Name=1" evidence="1">
    <location>
        <begin position="41"/>
        <end position="60"/>
    </location>
</feature>
<feature type="topological domain" description="Cytoplasmic" evidence="1">
    <location>
        <begin position="61"/>
        <end position="76"/>
    </location>
</feature>
<feature type="transmembrane region" description="Helical; Name=2" evidence="1">
    <location>
        <begin position="77"/>
        <end position="96"/>
    </location>
</feature>
<feature type="topological domain" description="Extracellular" evidence="1">
    <location>
        <begin position="97"/>
        <end position="114"/>
    </location>
</feature>
<feature type="transmembrane region" description="Helical; Name=3" evidence="1">
    <location>
        <begin position="115"/>
        <end position="136"/>
    </location>
</feature>
<feature type="topological domain" description="Cytoplasmic" evidence="1">
    <location>
        <begin position="137"/>
        <end position="160"/>
    </location>
</feature>
<feature type="transmembrane region" description="Helical; Name=4" evidence="1">
    <location>
        <begin position="161"/>
        <end position="178"/>
    </location>
</feature>
<feature type="topological domain" description="Extracellular" evidence="1">
    <location>
        <begin position="179"/>
        <end position="204"/>
    </location>
</feature>
<feature type="transmembrane region" description="Helical; Name=5" evidence="1">
    <location>
        <begin position="205"/>
        <end position="224"/>
    </location>
</feature>
<feature type="topological domain" description="Cytoplasmic" evidence="1">
    <location>
        <begin position="225"/>
        <end position="278"/>
    </location>
</feature>
<feature type="transmembrane region" description="Helical; Name=6" evidence="1">
    <location>
        <begin position="279"/>
        <end position="297"/>
    </location>
</feature>
<feature type="topological domain" description="Extracellular" evidence="1">
    <location>
        <begin position="298"/>
        <end position="303"/>
    </location>
</feature>
<feature type="transmembrane region" description="Helical; Name=7" evidence="1">
    <location>
        <begin position="304"/>
        <end position="323"/>
    </location>
</feature>
<feature type="topological domain" description="Cytoplasmic" evidence="1">
    <location>
        <begin position="324"/>
        <end position="379"/>
    </location>
</feature>
<feature type="glycosylation site" description="N-linked (GlcNAc...) asparagine" evidence="1">
    <location>
        <position position="101"/>
    </location>
</feature>
<feature type="disulfide bond" evidence="2">
    <location>
        <begin position="113"/>
        <end position="188"/>
    </location>
</feature>
<gene>
    <name type="primary">GNRHR2</name>
</gene>
<evidence type="ECO:0000255" key="1"/>
<evidence type="ECO:0000255" key="2">
    <source>
        <dbReference type="PROSITE-ProRule" id="PRU00521"/>
    </source>
</evidence>
<evidence type="ECO:0000305" key="3"/>
<accession>Q95MH6</accession>
<protein>
    <recommendedName>
        <fullName>Gonadotropin-releasing hormone II receptor</fullName>
        <shortName>GnRH II receptor</shortName>
        <shortName>GnRH-II-R</shortName>
    </recommendedName>
    <alternativeName>
        <fullName>Type II GnRH receptor</fullName>
    </alternativeName>
</protein>
<proteinExistence type="evidence at transcript level"/>
<dbReference type="EMBL" id="AF353988">
    <property type="protein sequence ID" value="AAK52746.1"/>
    <property type="molecule type" value="mRNA"/>
</dbReference>
<dbReference type="SMR" id="Q95MH6"/>
<dbReference type="BindingDB" id="Q95MH6"/>
<dbReference type="GlyCosmos" id="Q95MH6">
    <property type="glycosylation" value="1 site, No reported glycans"/>
</dbReference>
<dbReference type="GO" id="GO:0005886">
    <property type="term" value="C:plasma membrane"/>
    <property type="evidence" value="ECO:0007669"/>
    <property type="project" value="UniProtKB-SubCell"/>
</dbReference>
<dbReference type="GO" id="GO:0004930">
    <property type="term" value="F:G protein-coupled receptor activity"/>
    <property type="evidence" value="ECO:0007669"/>
    <property type="project" value="UniProtKB-KW"/>
</dbReference>
<dbReference type="GO" id="GO:0042277">
    <property type="term" value="F:peptide binding"/>
    <property type="evidence" value="ECO:0007669"/>
    <property type="project" value="TreeGrafter"/>
</dbReference>
<dbReference type="GO" id="GO:0016500">
    <property type="term" value="F:protein-hormone receptor activity"/>
    <property type="evidence" value="ECO:0007669"/>
    <property type="project" value="InterPro"/>
</dbReference>
<dbReference type="GO" id="GO:0032870">
    <property type="term" value="P:cellular response to hormone stimulus"/>
    <property type="evidence" value="ECO:0007669"/>
    <property type="project" value="TreeGrafter"/>
</dbReference>
<dbReference type="CDD" id="cd15383">
    <property type="entry name" value="7tmA_GnRHR_vertebrate"/>
    <property type="match status" value="1"/>
</dbReference>
<dbReference type="FunFam" id="1.20.1070.10:FF:000199">
    <property type="entry name" value="Gonadotropin-releasing hormone II receptor"/>
    <property type="match status" value="1"/>
</dbReference>
<dbReference type="Gene3D" id="1.20.1070.10">
    <property type="entry name" value="Rhodopsin 7-helix transmembrane proteins"/>
    <property type="match status" value="1"/>
</dbReference>
<dbReference type="InterPro" id="IPR000276">
    <property type="entry name" value="GPCR_Rhodpsn"/>
</dbReference>
<dbReference type="InterPro" id="IPR017452">
    <property type="entry name" value="GPCR_Rhodpsn_7TM"/>
</dbReference>
<dbReference type="InterPro" id="IPR001658">
    <property type="entry name" value="GphnRH_fam_rcpt"/>
</dbReference>
<dbReference type="PANTHER" id="PTHR24241:SF69">
    <property type="entry name" value="GONADOTROPIN-RELEASING HORMONE II RECEPTOR-RELATED"/>
    <property type="match status" value="1"/>
</dbReference>
<dbReference type="PANTHER" id="PTHR24241">
    <property type="entry name" value="NEUROPEPTIDE RECEPTOR-RELATED G-PROTEIN COUPLED RECEPTOR"/>
    <property type="match status" value="1"/>
</dbReference>
<dbReference type="Pfam" id="PF00001">
    <property type="entry name" value="7tm_1"/>
    <property type="match status" value="1"/>
</dbReference>
<dbReference type="PRINTS" id="PR00529">
    <property type="entry name" value="GNADOTRPHINR"/>
</dbReference>
<dbReference type="PRINTS" id="PR00237">
    <property type="entry name" value="GPCRRHODOPSN"/>
</dbReference>
<dbReference type="SUPFAM" id="SSF81321">
    <property type="entry name" value="Family A G protein-coupled receptor-like"/>
    <property type="match status" value="1"/>
</dbReference>
<dbReference type="PROSITE" id="PS50262">
    <property type="entry name" value="G_PROTEIN_RECEP_F1_2"/>
    <property type="match status" value="1"/>
</dbReference>
<organism>
    <name type="scientific">Chlorocebus aethiops</name>
    <name type="common">Green monkey</name>
    <name type="synonym">Cercopithecus aethiops</name>
    <dbReference type="NCBI Taxonomy" id="9534"/>
    <lineage>
        <taxon>Eukaryota</taxon>
        <taxon>Metazoa</taxon>
        <taxon>Chordata</taxon>
        <taxon>Craniata</taxon>
        <taxon>Vertebrata</taxon>
        <taxon>Euteleostomi</taxon>
        <taxon>Mammalia</taxon>
        <taxon>Eutheria</taxon>
        <taxon>Euarchontoglires</taxon>
        <taxon>Primates</taxon>
        <taxon>Haplorrhini</taxon>
        <taxon>Catarrhini</taxon>
        <taxon>Cercopithecidae</taxon>
        <taxon>Cercopithecinae</taxon>
        <taxon>Chlorocebus</taxon>
    </lineage>
</organism>